<name>NHAP2_ECOL6</name>
<gene>
    <name evidence="1" type="primary">nhaP2</name>
    <name type="synonym">cvrA</name>
    <name type="ordered locus">c1640</name>
</gene>
<proteinExistence type="inferred from homology"/>
<feature type="chain" id="PRO_0000052382" description="K(+)/H(+) antiporter NhaP2">
    <location>
        <begin position="1"/>
        <end position="578"/>
    </location>
</feature>
<feature type="transmembrane region" description="Helical" evidence="1">
    <location>
        <begin position="6"/>
        <end position="26"/>
    </location>
</feature>
<feature type="transmembrane region" description="Helical" evidence="1">
    <location>
        <begin position="30"/>
        <end position="50"/>
    </location>
</feature>
<feature type="transmembrane region" description="Helical" evidence="1">
    <location>
        <begin position="58"/>
        <end position="78"/>
    </location>
</feature>
<feature type="transmembrane region" description="Helical" evidence="1">
    <location>
        <begin position="87"/>
        <end position="107"/>
    </location>
</feature>
<feature type="transmembrane region" description="Helical" evidence="1">
    <location>
        <begin position="109"/>
        <end position="129"/>
    </location>
</feature>
<feature type="transmembrane region" description="Helical" evidence="1">
    <location>
        <begin position="156"/>
        <end position="176"/>
    </location>
</feature>
<feature type="transmembrane region" description="Helical" evidence="1">
    <location>
        <begin position="185"/>
        <end position="205"/>
    </location>
</feature>
<feature type="transmembrane region" description="Helical" evidence="1">
    <location>
        <begin position="216"/>
        <end position="236"/>
    </location>
</feature>
<feature type="transmembrane region" description="Helical" evidence="1">
    <location>
        <begin position="237"/>
        <end position="257"/>
    </location>
</feature>
<feature type="transmembrane region" description="Helical" evidence="1">
    <location>
        <begin position="270"/>
        <end position="290"/>
    </location>
</feature>
<feature type="transmembrane region" description="Helical" evidence="1">
    <location>
        <begin position="293"/>
        <end position="313"/>
    </location>
</feature>
<feature type="transmembrane region" description="Helical" evidence="1">
    <location>
        <begin position="334"/>
        <end position="354"/>
    </location>
</feature>
<feature type="transmembrane region" description="Helical" evidence="1">
    <location>
        <begin position="363"/>
        <end position="383"/>
    </location>
</feature>
<feature type="domain" description="RCK C-terminal" evidence="1">
    <location>
        <begin position="403"/>
        <end position="485"/>
    </location>
</feature>
<feature type="sequence conflict" description="In Ref. 1 and 2." evidence="2" ref="1 2">
    <original>R</original>
    <variation>C</variation>
    <location>
        <position position="86"/>
    </location>
</feature>
<feature type="sequence conflict" description="In Ref. 1 and 2." evidence="2" ref="1 2">
    <original>A</original>
    <variation>G</variation>
    <location>
        <position position="112"/>
    </location>
</feature>
<feature type="sequence conflict" description="In Ref. 1 and 2." evidence="2" ref="1 2">
    <original>S</original>
    <variation>F</variation>
    <location>
        <position position="139"/>
    </location>
</feature>
<organism>
    <name type="scientific">Escherichia coli O6:H1 (strain CFT073 / ATCC 700928 / UPEC)</name>
    <dbReference type="NCBI Taxonomy" id="199310"/>
    <lineage>
        <taxon>Bacteria</taxon>
        <taxon>Pseudomonadati</taxon>
        <taxon>Pseudomonadota</taxon>
        <taxon>Gammaproteobacteria</taxon>
        <taxon>Enterobacterales</taxon>
        <taxon>Enterobacteriaceae</taxon>
        <taxon>Escherichia</taxon>
    </lineage>
</organism>
<reference key="1">
    <citation type="journal article" date="1997" name="Infect. Immun.">
        <title>Pathogenicity island sequences of pyelonephritogenic Escherichia coli CFT073 are associated with virulent uropathogenic strains.</title>
        <authorList>
            <person name="Kao J.-S."/>
            <person name="Stucker D.M."/>
            <person name="Warren J.W."/>
            <person name="Mobley H.L.T."/>
        </authorList>
    </citation>
    <scope>NUCLEOTIDE SEQUENCE [GENOMIC DNA]</scope>
    <source>
        <strain>CFT073 / ATCC 700928 / UPEC</strain>
    </source>
</reference>
<reference key="2">
    <citation type="journal article" date="1998" name="Infect. Immun.">
        <title>Genomic analysis of a pathogenicity island in uropathogenic Escherichia coli CFT073: distribution of homologous sequences among isolates from patients with pyelonephritis, cystitis, and catheter-associated bacteriuria and from fecal samples.</title>
        <authorList>
            <person name="Guyer D.M."/>
            <person name="Kao J.-S."/>
            <person name="Mobley H.L.T."/>
        </authorList>
    </citation>
    <scope>NUCLEOTIDE SEQUENCE [GENOMIC DNA]</scope>
    <source>
        <strain>CFT073 / ATCC 700928 / UPEC</strain>
    </source>
</reference>
<reference key="3">
    <citation type="journal article" date="2002" name="Proc. Natl. Acad. Sci. U.S.A.">
        <title>Extensive mosaic structure revealed by the complete genome sequence of uropathogenic Escherichia coli.</title>
        <authorList>
            <person name="Welch R.A."/>
            <person name="Burland V."/>
            <person name="Plunkett G. III"/>
            <person name="Redford P."/>
            <person name="Roesch P."/>
            <person name="Rasko D."/>
            <person name="Buckles E.L."/>
            <person name="Liou S.-R."/>
            <person name="Boutin A."/>
            <person name="Hackett J."/>
            <person name="Stroud D."/>
            <person name="Mayhew G.F."/>
            <person name="Rose D.J."/>
            <person name="Zhou S."/>
            <person name="Schwartz D.C."/>
            <person name="Perna N.T."/>
            <person name="Mobley H.L.T."/>
            <person name="Donnenberg M.S."/>
            <person name="Blattner F.R."/>
        </authorList>
    </citation>
    <scope>NUCLEOTIDE SEQUENCE [LARGE SCALE GENOMIC DNA]</scope>
    <source>
        <strain>CFT073 / ATCC 700928 / UPEC</strain>
    </source>
</reference>
<evidence type="ECO:0000255" key="1">
    <source>
        <dbReference type="HAMAP-Rule" id="MF_01075"/>
    </source>
</evidence>
<evidence type="ECO:0000305" key="2"/>
<sequence>MDATTIISLFILGSILVTSSILLSSFSSRLGIPILVIFLAIGMLAGVDGVGGIPFDNYPFAYMVSNLALAIILLDGGMRTQASSFRVALGPALSLATLGVLITSGLTGMMAAWLFNLDLIEGLLIGAIVGSTDAAAVFSLLGGKGLNERVGSTLEIESGSNDPMAVFLTITLIAMIQQHESSVSWMFVVDILQQFGLGIVIGLGGGYLLLQMINRIALPAGLYPLLALSGGILIFALTTALEGSGILAVYLCGFLLGNRPIRNRYGILQNFDGLAWLAQIAMFLVLGLLVNPSDLLPIAIPALILSAWMIFFARPLSVFAGLLPFRGFNLRERVFISWVGLRGAVPIILAVFPMMAGLENARLFFNVAFFVVLVSLLLQGTSLSWAAKKAKVVVPPVGRPVSRVGLDIHPENPWEQFVYQLSADKWCVGAALRDLHMPKETRIAALFRDNQLLHPTGSTRLREGDVLCVIGRERDLPALGKLFSQSPPVALDQRFFGDFILEASAKYADVALIYGLEDGREYRDKQQTLGEIVQQLLGAAPVVGDQVEFAGMIWTVAEKEDNEVLKIGVRVAEEEAES</sequence>
<comment type="function">
    <text evidence="1">K(+)/H(+) antiporter that extrudes potassium in exchange for external protons and maintains the internal concentration of potassium under toxic levels.</text>
</comment>
<comment type="catalytic activity">
    <reaction evidence="1">
        <text>K(+)(in) + H(+)(out) = K(+)(out) + H(+)(in)</text>
        <dbReference type="Rhea" id="RHEA:29467"/>
        <dbReference type="ChEBI" id="CHEBI:15378"/>
        <dbReference type="ChEBI" id="CHEBI:29103"/>
    </reaction>
    <physiologicalReaction direction="left-to-right" evidence="1">
        <dbReference type="Rhea" id="RHEA:29468"/>
    </physiologicalReaction>
</comment>
<comment type="subcellular location">
    <subcellularLocation>
        <location evidence="1">Cell inner membrane</location>
        <topology evidence="1">Multi-pass membrane protein</topology>
    </subcellularLocation>
</comment>
<comment type="similarity">
    <text evidence="1">Belongs to the monovalent cation:proton antiporter 1 (CPA1) transporter (TC 2.A.36) family. NhaP2 subfamily.</text>
</comment>
<comment type="sequence caution" evidence="2">
    <conflict type="erroneous initiation">
        <sequence resource="EMBL-CDS" id="AAB61290"/>
    </conflict>
</comment>
<comment type="sequence caution" evidence="2">
    <conflict type="erroneous initiation">
        <sequence resource="EMBL-CDS" id="AAC61706"/>
    </conflict>
</comment>
<keyword id="KW-0050">Antiport</keyword>
<keyword id="KW-0997">Cell inner membrane</keyword>
<keyword id="KW-1003">Cell membrane</keyword>
<keyword id="KW-0406">Ion transport</keyword>
<keyword id="KW-0472">Membrane</keyword>
<keyword id="KW-0630">Potassium</keyword>
<keyword id="KW-0633">Potassium transport</keyword>
<keyword id="KW-1185">Reference proteome</keyword>
<keyword id="KW-0812">Transmembrane</keyword>
<keyword id="KW-1133">Transmembrane helix</keyword>
<keyword id="KW-0813">Transport</keyword>
<accession>P0A3R7</accession>
<accession>P59239</accession>
<accession>Q8XDK0</accession>
<dbReference type="EMBL" id="AF003741">
    <property type="protein sequence ID" value="AAB61290.1"/>
    <property type="status" value="ALT_INIT"/>
    <property type="molecule type" value="Genomic_DNA"/>
</dbReference>
<dbReference type="EMBL" id="AF081283">
    <property type="protein sequence ID" value="AAC61706.1"/>
    <property type="status" value="ALT_INIT"/>
    <property type="molecule type" value="Genomic_DNA"/>
</dbReference>
<dbReference type="EMBL" id="AE014075">
    <property type="protein sequence ID" value="AAN80105.1"/>
    <property type="molecule type" value="Genomic_DNA"/>
</dbReference>
<dbReference type="RefSeq" id="WP_000340206.1">
    <property type="nucleotide sequence ID" value="NZ_CP051263.1"/>
</dbReference>
<dbReference type="SMR" id="P0A3R7"/>
<dbReference type="STRING" id="199310.c1640"/>
<dbReference type="KEGG" id="ecc:c1640"/>
<dbReference type="eggNOG" id="COG3263">
    <property type="taxonomic scope" value="Bacteria"/>
</dbReference>
<dbReference type="HOGENOM" id="CLU_005912_9_2_6"/>
<dbReference type="BioCyc" id="ECOL199310:C1640-MONOMER"/>
<dbReference type="Proteomes" id="UP000001410">
    <property type="component" value="Chromosome"/>
</dbReference>
<dbReference type="GO" id="GO:0005886">
    <property type="term" value="C:plasma membrane"/>
    <property type="evidence" value="ECO:0007669"/>
    <property type="project" value="UniProtKB-SubCell"/>
</dbReference>
<dbReference type="GO" id="GO:0050660">
    <property type="term" value="F:flavin adenine dinucleotide binding"/>
    <property type="evidence" value="ECO:0007669"/>
    <property type="project" value="InterPro"/>
</dbReference>
<dbReference type="GO" id="GO:0015386">
    <property type="term" value="F:potassium:proton antiporter activity"/>
    <property type="evidence" value="ECO:0007669"/>
    <property type="project" value="UniProtKB-UniRule"/>
</dbReference>
<dbReference type="GO" id="GO:0006884">
    <property type="term" value="P:cell volume homeostasis"/>
    <property type="evidence" value="ECO:0007669"/>
    <property type="project" value="InterPro"/>
</dbReference>
<dbReference type="FunFam" id="1.20.1530.20:FF:000002">
    <property type="entry name" value="K(+)/H(+) antiporter NhaP2"/>
    <property type="match status" value="1"/>
</dbReference>
<dbReference type="FunFam" id="3.30.465.10:FF:000009">
    <property type="entry name" value="K(+)/H(+) antiporter NhaP2"/>
    <property type="match status" value="1"/>
</dbReference>
<dbReference type="FunFam" id="3.30.70.1450:FF:000007">
    <property type="entry name" value="K(+)/H(+) antiporter NhaP2"/>
    <property type="match status" value="1"/>
</dbReference>
<dbReference type="Gene3D" id="1.20.1530.20">
    <property type="match status" value="1"/>
</dbReference>
<dbReference type="Gene3D" id="3.30.465.10">
    <property type="match status" value="1"/>
</dbReference>
<dbReference type="Gene3D" id="3.30.70.1450">
    <property type="entry name" value="Regulator of K+ conductance, C-terminal domain"/>
    <property type="match status" value="1"/>
</dbReference>
<dbReference type="HAMAP" id="MF_01075">
    <property type="entry name" value="NhaP2"/>
    <property type="match status" value="1"/>
</dbReference>
<dbReference type="InterPro" id="IPR006153">
    <property type="entry name" value="Cation/H_exchanger_TM"/>
</dbReference>
<dbReference type="InterPro" id="IPR036318">
    <property type="entry name" value="FAD-bd_PCMH-like_sf"/>
</dbReference>
<dbReference type="InterPro" id="IPR016169">
    <property type="entry name" value="FAD-bd_PCMH_sub2"/>
</dbReference>
<dbReference type="InterPro" id="IPR038770">
    <property type="entry name" value="Na+/solute_symporter_sf"/>
</dbReference>
<dbReference type="InterPro" id="IPR023729">
    <property type="entry name" value="NhaP2"/>
</dbReference>
<dbReference type="InterPro" id="IPR006037">
    <property type="entry name" value="RCK_C"/>
</dbReference>
<dbReference type="InterPro" id="IPR036721">
    <property type="entry name" value="RCK_C_sf"/>
</dbReference>
<dbReference type="InterPro" id="IPR005170">
    <property type="entry name" value="Transptr-assoc_dom"/>
</dbReference>
<dbReference type="NCBIfam" id="NF003714">
    <property type="entry name" value="PRK05326.1-1"/>
    <property type="match status" value="1"/>
</dbReference>
<dbReference type="NCBIfam" id="NF003715">
    <property type="entry name" value="PRK05326.1-2"/>
    <property type="match status" value="1"/>
</dbReference>
<dbReference type="NCBIfam" id="NF003716">
    <property type="entry name" value="PRK05326.1-3"/>
    <property type="match status" value="1"/>
</dbReference>
<dbReference type="PANTHER" id="PTHR32507:SF7">
    <property type="entry name" value="K(+)_H(+) ANTIPORTER NHAP2"/>
    <property type="match status" value="1"/>
</dbReference>
<dbReference type="PANTHER" id="PTHR32507">
    <property type="entry name" value="NA(+)/H(+) ANTIPORTER 1"/>
    <property type="match status" value="1"/>
</dbReference>
<dbReference type="Pfam" id="PF03471">
    <property type="entry name" value="CorC_HlyC"/>
    <property type="match status" value="1"/>
</dbReference>
<dbReference type="Pfam" id="PF00999">
    <property type="entry name" value="Na_H_Exchanger"/>
    <property type="match status" value="1"/>
</dbReference>
<dbReference type="Pfam" id="PF02080">
    <property type="entry name" value="TrkA_C"/>
    <property type="match status" value="1"/>
</dbReference>
<dbReference type="SMART" id="SM01091">
    <property type="entry name" value="CorC_HlyC"/>
    <property type="match status" value="1"/>
</dbReference>
<dbReference type="SUPFAM" id="SSF56176">
    <property type="entry name" value="FAD-binding/transporter-associated domain-like"/>
    <property type="match status" value="1"/>
</dbReference>
<dbReference type="SUPFAM" id="SSF116726">
    <property type="entry name" value="TrkA C-terminal domain-like"/>
    <property type="match status" value="1"/>
</dbReference>
<dbReference type="PROSITE" id="PS51202">
    <property type="entry name" value="RCK_C"/>
    <property type="match status" value="1"/>
</dbReference>
<protein>
    <recommendedName>
        <fullName evidence="1">K(+)/H(+) antiporter NhaP2</fullName>
    </recommendedName>
    <alternativeName>
        <fullName evidence="1">Potassium/proton antiporter NhaP2</fullName>
    </alternativeName>
</protein>